<sequence>MKADIHPNYEAVAVTCSCGNKFETRSTLGSTLAIDVCNLCHPFYTGKQKVLDTGGRVQRFADRFGMFGTKK</sequence>
<organism>
    <name type="scientific">Pseudomonas putida (strain W619)</name>
    <dbReference type="NCBI Taxonomy" id="390235"/>
    <lineage>
        <taxon>Bacteria</taxon>
        <taxon>Pseudomonadati</taxon>
        <taxon>Pseudomonadota</taxon>
        <taxon>Gammaproteobacteria</taxon>
        <taxon>Pseudomonadales</taxon>
        <taxon>Pseudomonadaceae</taxon>
        <taxon>Pseudomonas</taxon>
    </lineage>
</organism>
<accession>B1J2I5</accession>
<gene>
    <name evidence="1" type="primary">rpmE</name>
    <name type="ordered locus">PputW619_0378</name>
</gene>
<proteinExistence type="inferred from homology"/>
<evidence type="ECO:0000255" key="1">
    <source>
        <dbReference type="HAMAP-Rule" id="MF_00501"/>
    </source>
</evidence>
<evidence type="ECO:0000305" key="2"/>
<protein>
    <recommendedName>
        <fullName evidence="1">Large ribosomal subunit protein bL31</fullName>
    </recommendedName>
    <alternativeName>
        <fullName evidence="2">50S ribosomal protein L31</fullName>
    </alternativeName>
</protein>
<name>RL31_PSEPW</name>
<dbReference type="EMBL" id="CP000949">
    <property type="protein sequence ID" value="ACA70884.1"/>
    <property type="molecule type" value="Genomic_DNA"/>
</dbReference>
<dbReference type="SMR" id="B1J2I5"/>
<dbReference type="STRING" id="390235.PputW619_0378"/>
<dbReference type="KEGG" id="ppw:PputW619_0378"/>
<dbReference type="eggNOG" id="COG0254">
    <property type="taxonomic scope" value="Bacteria"/>
</dbReference>
<dbReference type="HOGENOM" id="CLU_114306_4_0_6"/>
<dbReference type="OrthoDB" id="9803251at2"/>
<dbReference type="GO" id="GO:1990904">
    <property type="term" value="C:ribonucleoprotein complex"/>
    <property type="evidence" value="ECO:0007669"/>
    <property type="project" value="UniProtKB-KW"/>
</dbReference>
<dbReference type="GO" id="GO:0005840">
    <property type="term" value="C:ribosome"/>
    <property type="evidence" value="ECO:0007669"/>
    <property type="project" value="UniProtKB-KW"/>
</dbReference>
<dbReference type="GO" id="GO:0046872">
    <property type="term" value="F:metal ion binding"/>
    <property type="evidence" value="ECO:0007669"/>
    <property type="project" value="UniProtKB-KW"/>
</dbReference>
<dbReference type="GO" id="GO:0019843">
    <property type="term" value="F:rRNA binding"/>
    <property type="evidence" value="ECO:0007669"/>
    <property type="project" value="UniProtKB-KW"/>
</dbReference>
<dbReference type="GO" id="GO:0003735">
    <property type="term" value="F:structural constituent of ribosome"/>
    <property type="evidence" value="ECO:0007669"/>
    <property type="project" value="InterPro"/>
</dbReference>
<dbReference type="GO" id="GO:0006412">
    <property type="term" value="P:translation"/>
    <property type="evidence" value="ECO:0007669"/>
    <property type="project" value="UniProtKB-UniRule"/>
</dbReference>
<dbReference type="Gene3D" id="4.10.830.30">
    <property type="entry name" value="Ribosomal protein L31"/>
    <property type="match status" value="1"/>
</dbReference>
<dbReference type="HAMAP" id="MF_00501">
    <property type="entry name" value="Ribosomal_bL31_1"/>
    <property type="match status" value="1"/>
</dbReference>
<dbReference type="InterPro" id="IPR034704">
    <property type="entry name" value="Ribosomal_bL28/bL31-like_sf"/>
</dbReference>
<dbReference type="InterPro" id="IPR002150">
    <property type="entry name" value="Ribosomal_bL31"/>
</dbReference>
<dbReference type="InterPro" id="IPR027491">
    <property type="entry name" value="Ribosomal_bL31_A"/>
</dbReference>
<dbReference type="InterPro" id="IPR042105">
    <property type="entry name" value="Ribosomal_bL31_sf"/>
</dbReference>
<dbReference type="NCBIfam" id="TIGR00105">
    <property type="entry name" value="L31"/>
    <property type="match status" value="1"/>
</dbReference>
<dbReference type="NCBIfam" id="NF000612">
    <property type="entry name" value="PRK00019.1"/>
    <property type="match status" value="1"/>
</dbReference>
<dbReference type="NCBIfam" id="NF001809">
    <property type="entry name" value="PRK00528.1"/>
    <property type="match status" value="1"/>
</dbReference>
<dbReference type="PANTHER" id="PTHR33280">
    <property type="entry name" value="50S RIBOSOMAL PROTEIN L31, CHLOROPLASTIC"/>
    <property type="match status" value="1"/>
</dbReference>
<dbReference type="PANTHER" id="PTHR33280:SF6">
    <property type="entry name" value="LARGE RIBOSOMAL SUBUNIT PROTEIN BL31A"/>
    <property type="match status" value="1"/>
</dbReference>
<dbReference type="Pfam" id="PF01197">
    <property type="entry name" value="Ribosomal_L31"/>
    <property type="match status" value="1"/>
</dbReference>
<dbReference type="PRINTS" id="PR01249">
    <property type="entry name" value="RIBOSOMALL31"/>
</dbReference>
<dbReference type="SUPFAM" id="SSF143800">
    <property type="entry name" value="L28p-like"/>
    <property type="match status" value="1"/>
</dbReference>
<dbReference type="PROSITE" id="PS01143">
    <property type="entry name" value="RIBOSOMAL_L31"/>
    <property type="match status" value="1"/>
</dbReference>
<keyword id="KW-0479">Metal-binding</keyword>
<keyword id="KW-0687">Ribonucleoprotein</keyword>
<keyword id="KW-0689">Ribosomal protein</keyword>
<keyword id="KW-0694">RNA-binding</keyword>
<keyword id="KW-0699">rRNA-binding</keyword>
<keyword id="KW-0862">Zinc</keyword>
<reference key="1">
    <citation type="submission" date="2008-02" db="EMBL/GenBank/DDBJ databases">
        <title>Complete sequence of Pseudomonas putida W619.</title>
        <authorList>
            <person name="Copeland A."/>
            <person name="Lucas S."/>
            <person name="Lapidus A."/>
            <person name="Barry K."/>
            <person name="Detter J.C."/>
            <person name="Glavina del Rio T."/>
            <person name="Dalin E."/>
            <person name="Tice H."/>
            <person name="Pitluck S."/>
            <person name="Chain P."/>
            <person name="Malfatti S."/>
            <person name="Shin M."/>
            <person name="Vergez L."/>
            <person name="Schmutz J."/>
            <person name="Larimer F."/>
            <person name="Land M."/>
            <person name="Hauser L."/>
            <person name="Kyrpides N."/>
            <person name="Kim E."/>
            <person name="Taghavi S."/>
            <person name="Vangronsveld D."/>
            <person name="van der Lelie D."/>
            <person name="Richardson P."/>
        </authorList>
    </citation>
    <scope>NUCLEOTIDE SEQUENCE [LARGE SCALE GENOMIC DNA]</scope>
    <source>
        <strain>W619</strain>
    </source>
</reference>
<comment type="function">
    <text evidence="1">Binds the 23S rRNA.</text>
</comment>
<comment type="cofactor">
    <cofactor evidence="1">
        <name>Zn(2+)</name>
        <dbReference type="ChEBI" id="CHEBI:29105"/>
    </cofactor>
    <text evidence="1">Binds 1 zinc ion per subunit.</text>
</comment>
<comment type="subunit">
    <text evidence="1">Part of the 50S ribosomal subunit.</text>
</comment>
<comment type="similarity">
    <text evidence="1">Belongs to the bacterial ribosomal protein bL31 family. Type A subfamily.</text>
</comment>
<feature type="chain" id="PRO_1000126703" description="Large ribosomal subunit protein bL31">
    <location>
        <begin position="1"/>
        <end position="71"/>
    </location>
</feature>
<feature type="binding site" evidence="1">
    <location>
        <position position="16"/>
    </location>
    <ligand>
        <name>Zn(2+)</name>
        <dbReference type="ChEBI" id="CHEBI:29105"/>
    </ligand>
</feature>
<feature type="binding site" evidence="1">
    <location>
        <position position="18"/>
    </location>
    <ligand>
        <name>Zn(2+)</name>
        <dbReference type="ChEBI" id="CHEBI:29105"/>
    </ligand>
</feature>
<feature type="binding site" evidence="1">
    <location>
        <position position="37"/>
    </location>
    <ligand>
        <name>Zn(2+)</name>
        <dbReference type="ChEBI" id="CHEBI:29105"/>
    </ligand>
</feature>
<feature type="binding site" evidence="1">
    <location>
        <position position="40"/>
    </location>
    <ligand>
        <name>Zn(2+)</name>
        <dbReference type="ChEBI" id="CHEBI:29105"/>
    </ligand>
</feature>